<dbReference type="EC" id="3.2.1.106" evidence="5"/>
<dbReference type="EMBL" id="AF087431">
    <property type="protein sequence ID" value="AAC36477.1"/>
    <property type="molecule type" value="mRNA"/>
</dbReference>
<dbReference type="RefSeq" id="NP_113937.1">
    <property type="nucleotide sequence ID" value="NM_031749.2"/>
</dbReference>
<dbReference type="SMR" id="O88941"/>
<dbReference type="FunCoup" id="O88941">
    <property type="interactions" value="1856"/>
</dbReference>
<dbReference type="IntAct" id="O88941">
    <property type="interactions" value="1"/>
</dbReference>
<dbReference type="STRING" id="10116.ENSRNOP00000074720"/>
<dbReference type="CAZy" id="GH63">
    <property type="family name" value="Glycoside Hydrolase Family 63"/>
</dbReference>
<dbReference type="GlyCosmos" id="O88941">
    <property type="glycosylation" value="1 site, No reported glycans"/>
</dbReference>
<dbReference type="GlyGen" id="O88941">
    <property type="glycosylation" value="2 sites"/>
</dbReference>
<dbReference type="iPTMnet" id="O88941"/>
<dbReference type="PhosphoSitePlus" id="O88941"/>
<dbReference type="jPOST" id="O88941"/>
<dbReference type="PaxDb" id="10116-ENSRNOP00000011521"/>
<dbReference type="GeneID" id="78947"/>
<dbReference type="KEGG" id="rno:78947"/>
<dbReference type="UCSC" id="RGD:69240">
    <property type="organism name" value="rat"/>
</dbReference>
<dbReference type="AGR" id="RGD:69240"/>
<dbReference type="CTD" id="7841"/>
<dbReference type="RGD" id="69240">
    <property type="gene designation" value="Mogs"/>
</dbReference>
<dbReference type="eggNOG" id="KOG2161">
    <property type="taxonomic scope" value="Eukaryota"/>
</dbReference>
<dbReference type="InParanoid" id="O88941"/>
<dbReference type="PhylomeDB" id="O88941"/>
<dbReference type="UniPathway" id="UPA00280"/>
<dbReference type="PRO" id="PR:O88941"/>
<dbReference type="Proteomes" id="UP000002494">
    <property type="component" value="Unplaced"/>
</dbReference>
<dbReference type="GO" id="GO:0005789">
    <property type="term" value="C:endoplasmic reticulum membrane"/>
    <property type="evidence" value="ECO:0000318"/>
    <property type="project" value="GO_Central"/>
</dbReference>
<dbReference type="GO" id="GO:0004573">
    <property type="term" value="F:Glc3Man9GlcNAc2 oligosaccharide glucosidase activity"/>
    <property type="evidence" value="ECO:0000318"/>
    <property type="project" value="GO_Central"/>
</dbReference>
<dbReference type="GO" id="GO:0009311">
    <property type="term" value="P:oligosaccharide metabolic process"/>
    <property type="evidence" value="ECO:0007669"/>
    <property type="project" value="InterPro"/>
</dbReference>
<dbReference type="GO" id="GO:0006487">
    <property type="term" value="P:protein N-linked glycosylation"/>
    <property type="evidence" value="ECO:0000318"/>
    <property type="project" value="GO_Central"/>
</dbReference>
<dbReference type="FunFam" id="2.70.98.110:FF:000001">
    <property type="entry name" value="Mannosyl-oligosaccharide glucosidase"/>
    <property type="match status" value="1"/>
</dbReference>
<dbReference type="FunFam" id="1.50.10.10:FF:000009">
    <property type="entry name" value="mannosyl-oligosaccharide glucosidase"/>
    <property type="match status" value="1"/>
</dbReference>
<dbReference type="Gene3D" id="1.50.10.10">
    <property type="match status" value="1"/>
</dbReference>
<dbReference type="Gene3D" id="2.70.98.110">
    <property type="entry name" value="Glycosyl hydrolase family 63, N-terminal domain"/>
    <property type="match status" value="1"/>
</dbReference>
<dbReference type="InterPro" id="IPR008928">
    <property type="entry name" value="6-hairpin_glycosidase_sf"/>
</dbReference>
<dbReference type="InterPro" id="IPR012341">
    <property type="entry name" value="6hp_glycosidase-like_sf"/>
</dbReference>
<dbReference type="InterPro" id="IPR031335">
    <property type="entry name" value="Glyco_hydro_63_C"/>
</dbReference>
<dbReference type="InterPro" id="IPR031631">
    <property type="entry name" value="Glyco_hydro_63N"/>
</dbReference>
<dbReference type="InterPro" id="IPR038518">
    <property type="entry name" value="Glyco_hydro_63N_sf"/>
</dbReference>
<dbReference type="InterPro" id="IPR004888">
    <property type="entry name" value="Glycoside_hydrolase_63"/>
</dbReference>
<dbReference type="PANTHER" id="PTHR10412">
    <property type="entry name" value="MANNOSYL-OLIGOSACCHARIDE GLUCOSIDASE"/>
    <property type="match status" value="1"/>
</dbReference>
<dbReference type="PANTHER" id="PTHR10412:SF11">
    <property type="entry name" value="MANNOSYL-OLIGOSACCHARIDE GLUCOSIDASE"/>
    <property type="match status" value="1"/>
</dbReference>
<dbReference type="Pfam" id="PF03200">
    <property type="entry name" value="Glyco_hydro_63"/>
    <property type="match status" value="1"/>
</dbReference>
<dbReference type="Pfam" id="PF16923">
    <property type="entry name" value="Glyco_hydro_63N"/>
    <property type="match status" value="1"/>
</dbReference>
<dbReference type="SUPFAM" id="SSF48208">
    <property type="entry name" value="Six-hairpin glycosidases"/>
    <property type="match status" value="1"/>
</dbReference>
<comment type="function">
    <text evidence="5">In the context of N-glycan degradation, cleaves the distal alpha 1,2-linked glucose residue from the Glc(3)Man(9)GlcNAc(2) oligosaccharide precursor in a highly specific manner.</text>
</comment>
<comment type="catalytic activity">
    <reaction evidence="5">
        <text>N(4)-(alpha-D-Glc-(1-&gt;2)-alpha-D-Glc-(1-&gt;3)-alpha-D-Glc-(1-&gt;3)-alpha-D-Man-(1-&gt;2)-alpha-D-Man-(1-&gt;2)-alpha-D-Man-(1-&gt;3)-[alpha-D-Man-(1-&gt;2)-alpha-D-Man-(1-&gt;3)-[alpha-D-Man-(1-&gt;2)-alpha-D-Man-(1-&gt;6)]-alpha-D-Man-(1-&gt;6)]-beta-D-Man-(1-&gt;4)-beta-D-GlcNAc-(1-&gt;4)-beta-D-GlcNAc)-L-asparaginyl-[protein] + H2O = N(4)-(alpha-D-Glc-(1-&gt;3)-alpha-D-Glc-(1-&gt;3)-alpha-D-Man-(1-&gt;2)-alpha-D-Man-(1-&gt;2)-alpha-D-Man-(1-&gt;3)-[alpha-D-Man-(1-&gt;2)-alpha-D-Man-(1-&gt;3)-[alpha-D-Man-(1-&gt;2)-alpha-D-Man-(1-&gt;6)]-alpha-D-Man-(1-&gt;6)]-beta-D-Man-(1-&gt;4)-beta-D-GlcNAc-(1-&gt;4)-beta-D-GlcNAc)-L-asparaginyl-[protein] + beta-D-glucose</text>
        <dbReference type="Rhea" id="RHEA:55988"/>
        <dbReference type="Rhea" id="RHEA-COMP:12806"/>
        <dbReference type="Rhea" id="RHEA-COMP:14355"/>
        <dbReference type="ChEBI" id="CHEBI:15377"/>
        <dbReference type="ChEBI" id="CHEBI:15903"/>
        <dbReference type="ChEBI" id="CHEBI:59082"/>
        <dbReference type="ChEBI" id="CHEBI:132537"/>
        <dbReference type="EC" id="3.2.1.106"/>
    </reaction>
    <physiologicalReaction direction="left-to-right" evidence="5">
        <dbReference type="Rhea" id="RHEA:55989"/>
    </physiologicalReaction>
</comment>
<comment type="pathway">
    <text evidence="5">Glycan metabolism; N-glycan degradation.</text>
</comment>
<comment type="subcellular location">
    <subcellularLocation>
        <location evidence="5">Endoplasmic reticulum membrane</location>
        <topology evidence="5">Single-pass type II membrane protein</topology>
    </subcellularLocation>
</comment>
<comment type="similarity">
    <text evidence="6">Belongs to the glycosyl hydrolase 63 family.</text>
</comment>
<accession>O88941</accession>
<reference key="1">
    <citation type="submission" date="1998-08" db="EMBL/GenBank/DDBJ databases">
        <authorList>
            <person name="Varma G.M."/>
            <person name="Vijay I.K."/>
        </authorList>
    </citation>
    <scope>NUCLEOTIDE SEQUENCE [MRNA]</scope>
    <source>
        <strain>Sprague-Dawley</strain>
    </source>
</reference>
<reference key="2">
    <citation type="journal article" date="1991" name="J. Biol. Chem.">
        <title>Glucosidase I, a transmembrane endoplasmic reticular glycoprotein with a luminal catalytic domain.</title>
        <authorList>
            <person name="Shailubhai K."/>
            <person name="Pukazhenthi B.S."/>
            <person name="Saxena E.S."/>
            <person name="Varma G.M."/>
            <person name="Vijay I.K."/>
        </authorList>
    </citation>
    <scope>FUNCTION</scope>
    <scope>CATALYTIC ACTIVITY</scope>
    <scope>PATHWAY</scope>
    <scope>SUBCELLULAR LOCATION</scope>
    <scope>GLYCOSYLATION AT ASN-654</scope>
    <source>
        <tissue>Mammary gland</tissue>
    </source>
</reference>
<name>MOGS_RAT</name>
<sequence length="834" mass="91872">MARGERRRRAAAAEGARPLERARGAGRRDGRAGGARGSAGGAALAVVVLALAFGLSGRWVLAWLGVRRALTLHPAPSALPPDSSSPAVAPEFFWGTYRPHVYFGMKTRSPKPLLTGLMWAQQGATPGTPPKLRHTCEQGDGVGPYGWEFHDGLSFGRQHIYDGALRLTTEFVKRSGGHHGGDWSWRVTVEPQASGTPSFPLVSLFFYVVTDGQEVLLPEVGAKGQLKFISGHTSELGDFRLTLLPPTTPGDTVPKHGSYNVFWSSNPGLPLLTDMVKSHLNSWFHHRPPGASPERYLGLPGSLKWEERGPSGQGQFLVQQVTLKAPFSVEFVFESGSARTGRDQASEQLVGGQLTRALESHAAAFKERFERTFQLKEKGLSPEEQALGQVALSGLLGGIGYFYGQGLVLPDTGMEGSEQKMDPSLFPPVPLFSGVPSRSFFPRGFLWDEGFHQLVVQRWDPHLTREALGHWLGLLNADGWIGREQILGDEARARVPPEFLVQRAAHANPPTLLLPVIHMLEGRAPEDLAFLRRAFPRLHAWFSWLHQSQAGPVPLSYRWRGRDLALPTLLNPKTLPSGLDDYPRASHPSAAERHLDLRCWVTLGARVLSQLAEELGETEAAAELGPLAASLEAAGSLDELHWAPELGVFADFGNHTKAVQLKSRPPQGLVRVVGRPPARLQYVDALGYVSLFPLLLQLLEPSSPRLGPLLDVLADSRHLWSPFGLRSLSASSLFYKQRNTEHDPPYWRGAVWLNINYLALGALHHYGRVEGPHKVQAAKLYRELRANVVSNVRQQYQATGFLWEQYSDQDGRGMGCRPFQGWTSLVLLIMAEEY</sequence>
<proteinExistence type="evidence at protein level"/>
<feature type="chain" id="PRO_0000057712" description="Mannosyl-oligosaccharide glucosidase">
    <location>
        <begin position="1"/>
        <end position="834"/>
    </location>
</feature>
<feature type="topological domain" description="Cytoplasmic" evidence="3">
    <location>
        <begin position="1"/>
        <end position="36"/>
    </location>
</feature>
<feature type="transmembrane region" description="Helical; Signal-anchor for type II membrane protein" evidence="3">
    <location>
        <begin position="37"/>
        <end position="57"/>
    </location>
</feature>
<feature type="topological domain" description="Lumenal" evidence="3">
    <location>
        <begin position="58"/>
        <end position="834"/>
    </location>
</feature>
<feature type="region of interest" description="Disordered" evidence="4">
    <location>
        <begin position="1"/>
        <end position="37"/>
    </location>
</feature>
<feature type="region of interest" description="Required for endoplasmic reticulum targeting" evidence="1">
    <location>
        <begin position="74"/>
        <end position="136"/>
    </location>
</feature>
<feature type="short sequence motif" description="Endoplasmic reticulum targeting">
    <location>
        <begin position="3"/>
        <end position="9"/>
    </location>
</feature>
<feature type="compositionally biased region" description="Basic residues" evidence="4">
    <location>
        <begin position="1"/>
        <end position="10"/>
    </location>
</feature>
<feature type="compositionally biased region" description="Basic and acidic residues" evidence="4">
    <location>
        <begin position="17"/>
        <end position="31"/>
    </location>
</feature>
<feature type="active site" description="Proton donor" evidence="2">
    <location>
        <position position="580"/>
    </location>
</feature>
<feature type="active site" description="Proton acceptor" evidence="2">
    <location>
        <position position="804"/>
    </location>
</feature>
<feature type="glycosylation site" description="N-linked (GlcNAc...) asparagine" evidence="5">
    <location>
        <position position="654"/>
    </location>
</feature>
<organism>
    <name type="scientific">Rattus norvegicus</name>
    <name type="common">Rat</name>
    <dbReference type="NCBI Taxonomy" id="10116"/>
    <lineage>
        <taxon>Eukaryota</taxon>
        <taxon>Metazoa</taxon>
        <taxon>Chordata</taxon>
        <taxon>Craniata</taxon>
        <taxon>Vertebrata</taxon>
        <taxon>Euteleostomi</taxon>
        <taxon>Mammalia</taxon>
        <taxon>Eutheria</taxon>
        <taxon>Euarchontoglires</taxon>
        <taxon>Glires</taxon>
        <taxon>Rodentia</taxon>
        <taxon>Myomorpha</taxon>
        <taxon>Muroidea</taxon>
        <taxon>Muridae</taxon>
        <taxon>Murinae</taxon>
        <taxon>Rattus</taxon>
    </lineage>
</organism>
<evidence type="ECO:0000250" key="1"/>
<evidence type="ECO:0000250" key="2">
    <source>
        <dbReference type="UniProtKB" id="Q80UM7"/>
    </source>
</evidence>
<evidence type="ECO:0000255" key="3"/>
<evidence type="ECO:0000256" key="4">
    <source>
        <dbReference type="SAM" id="MobiDB-lite"/>
    </source>
</evidence>
<evidence type="ECO:0000269" key="5">
    <source>
    </source>
</evidence>
<evidence type="ECO:0000305" key="6"/>
<evidence type="ECO:0000305" key="7">
    <source>
    </source>
</evidence>
<evidence type="ECO:0000312" key="8">
    <source>
        <dbReference type="RGD" id="69240"/>
    </source>
</evidence>
<protein>
    <recommendedName>
        <fullName evidence="8">Mannosyl-oligosaccharide glucosidase</fullName>
        <ecNumber evidence="5">3.2.1.106</ecNumber>
    </recommendedName>
    <alternativeName>
        <fullName evidence="7">Glycoprotein-processing glucosidase I</fullName>
    </alternativeName>
</protein>
<keyword id="KW-0256">Endoplasmic reticulum</keyword>
<keyword id="KW-0325">Glycoprotein</keyword>
<keyword id="KW-0326">Glycosidase</keyword>
<keyword id="KW-0378">Hydrolase</keyword>
<keyword id="KW-0472">Membrane</keyword>
<keyword id="KW-1185">Reference proteome</keyword>
<keyword id="KW-0735">Signal-anchor</keyword>
<keyword id="KW-0812">Transmembrane</keyword>
<keyword id="KW-1133">Transmembrane helix</keyword>
<gene>
    <name evidence="8" type="primary">Mogs</name>
    <name type="synonym">Gcs1</name>
</gene>